<sequence>MAKLTKRMRVIREKVDATKQYDINEAIALLKELATAKFNESVDVAVNLGIDARKSDQNVRGATVLPHGTGRSVRVAVFTQGPNAEAAKAAGAELVGMEDLADQIKKGEMNFDVVIASPDAMRVVGQLGQVLGPRGLMPNPKVGTVTPNVAEAVKNAKAGQVRYRNDKNGIIHTTIGKVDFDADKLKENLEALLVALKKAKPSQAKGVYIKKVSISTTMGAGVAVDQAGLSASAN</sequence>
<evidence type="ECO:0000255" key="1">
    <source>
        <dbReference type="HAMAP-Rule" id="MF_01318"/>
    </source>
</evidence>
<evidence type="ECO:0000305" key="2"/>
<name>RL1_SALTY</name>
<protein>
    <recommendedName>
        <fullName evidence="1">Large ribosomal subunit protein uL1</fullName>
    </recommendedName>
    <alternativeName>
        <fullName evidence="2">50S ribosomal protein L1</fullName>
    </alternativeName>
</protein>
<keyword id="KW-1185">Reference proteome</keyword>
<keyword id="KW-0678">Repressor</keyword>
<keyword id="KW-0687">Ribonucleoprotein</keyword>
<keyword id="KW-0689">Ribosomal protein</keyword>
<keyword id="KW-0694">RNA-binding</keyword>
<keyword id="KW-0699">rRNA-binding</keyword>
<keyword id="KW-0810">Translation regulation</keyword>
<keyword id="KW-0820">tRNA-binding</keyword>
<dbReference type="EMBL" id="AF170176">
    <property type="protein sequence ID" value="AAF33496.1"/>
    <property type="molecule type" value="Genomic_DNA"/>
</dbReference>
<dbReference type="EMBL" id="AE006468">
    <property type="protein sequence ID" value="AAL22978.1"/>
    <property type="molecule type" value="Genomic_DNA"/>
</dbReference>
<dbReference type="RefSeq" id="NP_463019.1">
    <property type="nucleotide sequence ID" value="NC_003197.2"/>
</dbReference>
<dbReference type="RefSeq" id="WP_001096676.1">
    <property type="nucleotide sequence ID" value="NC_003197.2"/>
</dbReference>
<dbReference type="SMR" id="P0A2A3"/>
<dbReference type="STRING" id="99287.STM4150"/>
<dbReference type="PaxDb" id="99287-STM4150"/>
<dbReference type="GeneID" id="1255676"/>
<dbReference type="KEGG" id="stm:STM4150"/>
<dbReference type="PATRIC" id="fig|99287.12.peg.4362"/>
<dbReference type="HOGENOM" id="CLU_062853_0_0_6"/>
<dbReference type="OMA" id="EFRVDKH"/>
<dbReference type="PhylomeDB" id="P0A2A3"/>
<dbReference type="BioCyc" id="SENT99287:STM4150-MONOMER"/>
<dbReference type="Proteomes" id="UP000001014">
    <property type="component" value="Chromosome"/>
</dbReference>
<dbReference type="GO" id="GO:0022625">
    <property type="term" value="C:cytosolic large ribosomal subunit"/>
    <property type="evidence" value="ECO:0000318"/>
    <property type="project" value="GO_Central"/>
</dbReference>
<dbReference type="GO" id="GO:0019843">
    <property type="term" value="F:rRNA binding"/>
    <property type="evidence" value="ECO:0007669"/>
    <property type="project" value="UniProtKB-UniRule"/>
</dbReference>
<dbReference type="GO" id="GO:0003735">
    <property type="term" value="F:structural constituent of ribosome"/>
    <property type="evidence" value="ECO:0007669"/>
    <property type="project" value="InterPro"/>
</dbReference>
<dbReference type="GO" id="GO:0000049">
    <property type="term" value="F:tRNA binding"/>
    <property type="evidence" value="ECO:0007669"/>
    <property type="project" value="UniProtKB-KW"/>
</dbReference>
<dbReference type="GO" id="GO:0006417">
    <property type="term" value="P:regulation of translation"/>
    <property type="evidence" value="ECO:0007669"/>
    <property type="project" value="UniProtKB-KW"/>
</dbReference>
<dbReference type="GO" id="GO:0006412">
    <property type="term" value="P:translation"/>
    <property type="evidence" value="ECO:0007669"/>
    <property type="project" value="UniProtKB-UniRule"/>
</dbReference>
<dbReference type="CDD" id="cd00403">
    <property type="entry name" value="Ribosomal_L1"/>
    <property type="match status" value="1"/>
</dbReference>
<dbReference type="FunFam" id="3.40.50.790:FF:000001">
    <property type="entry name" value="50S ribosomal protein L1"/>
    <property type="match status" value="1"/>
</dbReference>
<dbReference type="Gene3D" id="3.30.190.20">
    <property type="match status" value="1"/>
</dbReference>
<dbReference type="Gene3D" id="3.40.50.790">
    <property type="match status" value="1"/>
</dbReference>
<dbReference type="HAMAP" id="MF_01318_B">
    <property type="entry name" value="Ribosomal_uL1_B"/>
    <property type="match status" value="1"/>
</dbReference>
<dbReference type="InterPro" id="IPR005878">
    <property type="entry name" value="Ribosom_uL1_bac-type"/>
</dbReference>
<dbReference type="InterPro" id="IPR002143">
    <property type="entry name" value="Ribosomal_uL1"/>
</dbReference>
<dbReference type="InterPro" id="IPR023674">
    <property type="entry name" value="Ribosomal_uL1-like"/>
</dbReference>
<dbReference type="InterPro" id="IPR028364">
    <property type="entry name" value="Ribosomal_uL1/biogenesis"/>
</dbReference>
<dbReference type="InterPro" id="IPR016095">
    <property type="entry name" value="Ribosomal_uL1_3-a/b-sand"/>
</dbReference>
<dbReference type="InterPro" id="IPR023673">
    <property type="entry name" value="Ribosomal_uL1_CS"/>
</dbReference>
<dbReference type="NCBIfam" id="TIGR01169">
    <property type="entry name" value="rplA_bact"/>
    <property type="match status" value="1"/>
</dbReference>
<dbReference type="PANTHER" id="PTHR36427">
    <property type="entry name" value="54S RIBOSOMAL PROTEIN L1, MITOCHONDRIAL"/>
    <property type="match status" value="1"/>
</dbReference>
<dbReference type="PANTHER" id="PTHR36427:SF3">
    <property type="entry name" value="LARGE RIBOSOMAL SUBUNIT PROTEIN UL1M"/>
    <property type="match status" value="1"/>
</dbReference>
<dbReference type="Pfam" id="PF00687">
    <property type="entry name" value="Ribosomal_L1"/>
    <property type="match status" value="1"/>
</dbReference>
<dbReference type="PIRSF" id="PIRSF002155">
    <property type="entry name" value="Ribosomal_L1"/>
    <property type="match status" value="1"/>
</dbReference>
<dbReference type="SUPFAM" id="SSF56808">
    <property type="entry name" value="Ribosomal protein L1"/>
    <property type="match status" value="1"/>
</dbReference>
<dbReference type="PROSITE" id="PS01199">
    <property type="entry name" value="RIBOSOMAL_L1"/>
    <property type="match status" value="1"/>
</dbReference>
<comment type="function">
    <text evidence="1">Binds directly to 23S rRNA. The L1 stalk is quite mobile in the ribosome, and is involved in E site tRNA release.</text>
</comment>
<comment type="function">
    <text evidence="1">Protein L1 is also a translational repressor protein, it controls the translation of the L11 operon by binding to its mRNA.</text>
</comment>
<comment type="subunit">
    <text evidence="1">Part of the 50S ribosomal subunit.</text>
</comment>
<comment type="similarity">
    <text evidence="1">Belongs to the universal ribosomal protein uL1 family.</text>
</comment>
<organism>
    <name type="scientific">Salmonella typhimurium (strain LT2 / SGSC1412 / ATCC 700720)</name>
    <dbReference type="NCBI Taxonomy" id="99287"/>
    <lineage>
        <taxon>Bacteria</taxon>
        <taxon>Pseudomonadati</taxon>
        <taxon>Pseudomonadota</taxon>
        <taxon>Gammaproteobacteria</taxon>
        <taxon>Enterobacterales</taxon>
        <taxon>Enterobacteriaceae</taxon>
        <taxon>Salmonella</taxon>
    </lineage>
</organism>
<proteinExistence type="inferred from homology"/>
<reference key="1">
    <citation type="journal article" date="2001" name="Nature">
        <title>Complete genome sequence of Salmonella enterica serovar Typhimurium LT2.</title>
        <authorList>
            <person name="McClelland M."/>
            <person name="Sanderson K.E."/>
            <person name="Spieth J."/>
            <person name="Clifton S.W."/>
            <person name="Latreille P."/>
            <person name="Courtney L."/>
            <person name="Porwollik S."/>
            <person name="Ali J."/>
            <person name="Dante M."/>
            <person name="Du F."/>
            <person name="Hou S."/>
            <person name="Layman D."/>
            <person name="Leonard S."/>
            <person name="Nguyen C."/>
            <person name="Scott K."/>
            <person name="Holmes A."/>
            <person name="Grewal N."/>
            <person name="Mulvaney E."/>
            <person name="Ryan E."/>
            <person name="Sun H."/>
            <person name="Florea L."/>
            <person name="Miller W."/>
            <person name="Stoneking T."/>
            <person name="Nhan M."/>
            <person name="Waterston R."/>
            <person name="Wilson R.K."/>
        </authorList>
    </citation>
    <scope>NUCLEOTIDE SEQUENCE [LARGE SCALE GENOMIC DNA]</scope>
    <source>
        <strain>LT2 / SGSC1412 / ATCC 700720</strain>
    </source>
</reference>
<feature type="chain" id="PRO_0000125726" description="Large ribosomal subunit protein uL1">
    <location>
        <begin position="1"/>
        <end position="234"/>
    </location>
</feature>
<accession>P0A2A3</accession>
<accession>Q9L9J9</accession>
<gene>
    <name evidence="1" type="primary">rplA</name>
    <name type="ordered locus">STM4150</name>
    <name type="ORF">STMF1.9</name>
</gene>